<keyword id="KW-0002">3D-structure</keyword>
<keyword id="KW-0067">ATP-binding</keyword>
<keyword id="KW-0963">Cytoplasm</keyword>
<keyword id="KW-0903">Direct protein sequencing</keyword>
<keyword id="KW-0547">Nucleotide-binding</keyword>
<keyword id="KW-1185">Reference proteome</keyword>
<organism>
    <name type="scientific">Mycobacterium tuberculosis (strain ATCC 25618 / H37Rv)</name>
    <dbReference type="NCBI Taxonomy" id="83332"/>
    <lineage>
        <taxon>Bacteria</taxon>
        <taxon>Bacillati</taxon>
        <taxon>Actinomycetota</taxon>
        <taxon>Actinomycetes</taxon>
        <taxon>Mycobacteriales</taxon>
        <taxon>Mycobacteriaceae</taxon>
        <taxon>Mycobacterium</taxon>
        <taxon>Mycobacterium tuberculosis complex</taxon>
    </lineage>
</organism>
<protein>
    <recommendedName>
        <fullName evidence="8">ESX-1 secretion system protein EccA1</fullName>
    </recommendedName>
    <alternativeName>
        <fullName evidence="7">ESX conserved component A1</fullName>
    </alternativeName>
    <alternativeName>
        <fullName evidence="8">Type VII secretion system protein EccA1</fullName>
        <shortName evidence="8">T7SS protein EccA1</shortName>
    </alternativeName>
</protein>
<name>ECCA1_MYCTU</name>
<dbReference type="EMBL" id="AL123456">
    <property type="protein sequence ID" value="CCP46697.1"/>
    <property type="molecule type" value="Genomic_DNA"/>
</dbReference>
<dbReference type="PIR" id="B70802">
    <property type="entry name" value="B70802"/>
</dbReference>
<dbReference type="RefSeq" id="NP_218385.1">
    <property type="nucleotide sequence ID" value="NC_000962.3"/>
</dbReference>
<dbReference type="RefSeq" id="WP_003399850.1">
    <property type="nucleotide sequence ID" value="NZ_NVQJ01000074.1"/>
</dbReference>
<dbReference type="PDB" id="4F3V">
    <property type="method" value="X-ray"/>
    <property type="resolution" value="2.00 A"/>
    <property type="chains" value="A/B=1-280"/>
</dbReference>
<dbReference type="PDBsum" id="4F3V"/>
<dbReference type="SMR" id="P9WPH9"/>
<dbReference type="STRING" id="83332.Rv3868"/>
<dbReference type="PaxDb" id="83332-Rv3868"/>
<dbReference type="DNASU" id="886199"/>
<dbReference type="GeneID" id="886199"/>
<dbReference type="KEGG" id="mtu:Rv3868"/>
<dbReference type="KEGG" id="mtv:RVBD_3868"/>
<dbReference type="TubercuList" id="Rv3868"/>
<dbReference type="eggNOG" id="COG0464">
    <property type="taxonomic scope" value="Bacteria"/>
</dbReference>
<dbReference type="InParanoid" id="P9WPH9"/>
<dbReference type="OrthoDB" id="9806903at2"/>
<dbReference type="PhylomeDB" id="P9WPH9"/>
<dbReference type="EvolutionaryTrace" id="P9WPH9"/>
<dbReference type="Proteomes" id="UP000001584">
    <property type="component" value="Chromosome"/>
</dbReference>
<dbReference type="GO" id="GO:0005737">
    <property type="term" value="C:cytoplasm"/>
    <property type="evidence" value="ECO:0007669"/>
    <property type="project" value="UniProtKB-SubCell"/>
</dbReference>
<dbReference type="GO" id="GO:0005886">
    <property type="term" value="C:plasma membrane"/>
    <property type="evidence" value="ECO:0007005"/>
    <property type="project" value="MTBBASE"/>
</dbReference>
<dbReference type="GO" id="GO:0005524">
    <property type="term" value="F:ATP binding"/>
    <property type="evidence" value="ECO:0007669"/>
    <property type="project" value="UniProtKB-KW"/>
</dbReference>
<dbReference type="GO" id="GO:0016887">
    <property type="term" value="F:ATP hydrolysis activity"/>
    <property type="evidence" value="ECO:0000314"/>
    <property type="project" value="MTBBASE"/>
</dbReference>
<dbReference type="GO" id="GO:0051701">
    <property type="term" value="P:biological process involved in interaction with host"/>
    <property type="evidence" value="ECO:0000315"/>
    <property type="project" value="MTBBASE"/>
</dbReference>
<dbReference type="CDD" id="cd00009">
    <property type="entry name" value="AAA"/>
    <property type="match status" value="1"/>
</dbReference>
<dbReference type="FunFam" id="3.40.50.300:FF:000216">
    <property type="entry name" value="Type VII secretion ATPase EccA"/>
    <property type="match status" value="1"/>
</dbReference>
<dbReference type="Gene3D" id="1.10.8.60">
    <property type="match status" value="1"/>
</dbReference>
<dbReference type="Gene3D" id="3.40.50.300">
    <property type="entry name" value="P-loop containing nucleotide triphosphate hydrolases"/>
    <property type="match status" value="1"/>
</dbReference>
<dbReference type="Gene3D" id="1.25.40.10">
    <property type="entry name" value="Tetratricopeptide repeat domain"/>
    <property type="match status" value="1"/>
</dbReference>
<dbReference type="InterPro" id="IPR003593">
    <property type="entry name" value="AAA+_ATPase"/>
</dbReference>
<dbReference type="InterPro" id="IPR041627">
    <property type="entry name" value="AAA_lid_6"/>
</dbReference>
<dbReference type="InterPro" id="IPR003959">
    <property type="entry name" value="ATPase_AAA_core"/>
</dbReference>
<dbReference type="InterPro" id="IPR000641">
    <property type="entry name" value="CbxX/CfxQ"/>
</dbReference>
<dbReference type="InterPro" id="IPR050773">
    <property type="entry name" value="CbxX/CfxQ_RuBisCO_ESX"/>
</dbReference>
<dbReference type="InterPro" id="IPR027417">
    <property type="entry name" value="P-loop_NTPase"/>
</dbReference>
<dbReference type="InterPro" id="IPR023835">
    <property type="entry name" value="T7SS_EccA"/>
</dbReference>
<dbReference type="InterPro" id="IPR049078">
    <property type="entry name" value="T7SS_EccA1-like_N"/>
</dbReference>
<dbReference type="InterPro" id="IPR011990">
    <property type="entry name" value="TPR-like_helical_dom_sf"/>
</dbReference>
<dbReference type="NCBIfam" id="TIGR03922">
    <property type="entry name" value="T7SS_EccA"/>
    <property type="match status" value="1"/>
</dbReference>
<dbReference type="PANTHER" id="PTHR43392">
    <property type="entry name" value="AAA-TYPE ATPASE FAMILY PROTEIN / ANKYRIN REPEAT FAMILY PROTEIN"/>
    <property type="match status" value="1"/>
</dbReference>
<dbReference type="PANTHER" id="PTHR43392:SF2">
    <property type="entry name" value="AAA-TYPE ATPASE FAMILY PROTEIN _ ANKYRIN REPEAT FAMILY PROTEIN"/>
    <property type="match status" value="1"/>
</dbReference>
<dbReference type="Pfam" id="PF00004">
    <property type="entry name" value="AAA"/>
    <property type="match status" value="1"/>
</dbReference>
<dbReference type="Pfam" id="PF17866">
    <property type="entry name" value="AAA_lid_6"/>
    <property type="match status" value="1"/>
</dbReference>
<dbReference type="Pfam" id="PF21545">
    <property type="entry name" value="T7SS_EccA1_N"/>
    <property type="match status" value="1"/>
</dbReference>
<dbReference type="PRINTS" id="PR00819">
    <property type="entry name" value="CBXCFQXSUPER"/>
</dbReference>
<dbReference type="SMART" id="SM00382">
    <property type="entry name" value="AAA"/>
    <property type="match status" value="1"/>
</dbReference>
<dbReference type="SUPFAM" id="SSF52540">
    <property type="entry name" value="P-loop containing nucleoside triphosphate hydrolases"/>
    <property type="match status" value="1"/>
</dbReference>
<feature type="chain" id="PRO_0000063049" description="ESX-1 secretion system protein EccA1">
    <location>
        <begin position="1"/>
        <end position="573"/>
    </location>
</feature>
<feature type="binding site" evidence="1">
    <location>
        <begin position="334"/>
        <end position="341"/>
    </location>
    <ligand>
        <name>ATP</name>
        <dbReference type="ChEBI" id="CHEBI:30616"/>
    </ligand>
</feature>
<feature type="mutagenesis site" description="Does not distord the binding site architecture. No change in catalytic efficiency and Vmax." evidence="4">
    <original>P</original>
    <variation>A</variation>
    <location>
        <position position="336"/>
    </location>
</feature>
<feature type="mutagenesis site" description="Decrease in substrate-binding and in catalytic efficiency." evidence="4">
    <original>T</original>
    <variation>A</variation>
    <location>
        <position position="338"/>
    </location>
</feature>
<feature type="mutagenesis site" description="Does not affect substrate-binding, but decreases the catalytic efficiency and the Vmax." evidence="4">
    <original>K</original>
    <variation>A</variation>
    <location>
        <position position="340"/>
    </location>
</feature>
<feature type="mutagenesis site" description="Large increase in the Km and strong decrease in catalytic efficiency. Loses the ability to self-associate in the presence of ATP and the cooperativity is nearly abolished." evidence="4">
    <original>R</original>
    <variation>A</variation>
    <location>
        <position position="429"/>
    </location>
</feature>
<feature type="helix" evidence="11">
    <location>
        <begin position="1"/>
        <end position="15"/>
    </location>
</feature>
<feature type="turn" evidence="11">
    <location>
        <begin position="16"/>
        <end position="18"/>
    </location>
</feature>
<feature type="helix" evidence="11">
    <location>
        <begin position="20"/>
        <end position="33"/>
    </location>
</feature>
<feature type="helix" evidence="11">
    <location>
        <begin position="38"/>
        <end position="46"/>
    </location>
</feature>
<feature type="helix" evidence="11">
    <location>
        <begin position="52"/>
        <end position="60"/>
    </location>
</feature>
<feature type="helix" evidence="11">
    <location>
        <begin position="62"/>
        <end position="64"/>
    </location>
</feature>
<feature type="helix" evidence="11">
    <location>
        <begin position="67"/>
        <end position="70"/>
    </location>
</feature>
<feature type="turn" evidence="11">
    <location>
        <begin position="71"/>
        <end position="73"/>
    </location>
</feature>
<feature type="helix" evidence="11">
    <location>
        <begin position="76"/>
        <end position="79"/>
    </location>
</feature>
<feature type="strand" evidence="11">
    <location>
        <begin position="82"/>
        <end position="84"/>
    </location>
</feature>
<feature type="turn" evidence="11">
    <location>
        <begin position="87"/>
        <end position="89"/>
    </location>
</feature>
<feature type="strand" evidence="11">
    <location>
        <begin position="93"/>
        <end position="95"/>
    </location>
</feature>
<feature type="helix" evidence="11">
    <location>
        <begin position="99"/>
        <end position="113"/>
    </location>
</feature>
<feature type="helix" evidence="11">
    <location>
        <begin position="116"/>
        <end position="123"/>
    </location>
</feature>
<feature type="helix" evidence="11">
    <location>
        <begin position="132"/>
        <end position="145"/>
    </location>
</feature>
<feature type="helix" evidence="11">
    <location>
        <begin position="149"/>
        <end position="156"/>
    </location>
</feature>
<feature type="helix" evidence="11">
    <location>
        <begin position="159"/>
        <end position="161"/>
    </location>
</feature>
<feature type="helix" evidence="11">
    <location>
        <begin position="165"/>
        <end position="181"/>
    </location>
</feature>
<feature type="helix" evidence="11">
    <location>
        <begin position="185"/>
        <end position="196"/>
    </location>
</feature>
<feature type="turn" evidence="11">
    <location>
        <begin position="199"/>
        <end position="204"/>
    </location>
</feature>
<feature type="helix" evidence="11">
    <location>
        <begin position="205"/>
        <end position="219"/>
    </location>
</feature>
<feature type="helix" evidence="11">
    <location>
        <begin position="222"/>
        <end position="235"/>
    </location>
</feature>
<feature type="helix" evidence="11">
    <location>
        <begin position="239"/>
        <end position="246"/>
    </location>
</feature>
<feature type="helix" evidence="11">
    <location>
        <begin position="257"/>
        <end position="261"/>
    </location>
</feature>
<feature type="strand" evidence="11">
    <location>
        <begin position="263"/>
        <end position="265"/>
    </location>
</feature>
<feature type="helix" evidence="11">
    <location>
        <begin position="269"/>
        <end position="271"/>
    </location>
</feature>
<sequence length="573" mass="62426">MTDRLASLFESAVSMLPMSEARSLDLFTEITNYDESACDAWIGRIRCGDTDRVTLFRAWYSRRNFGQLSGSVQISMSTLNARIAIGGLYGDITYPVTSPLAITMGFAACEAAQGNYADAMEALEAAPVAGSEHLVAWMKAVVYGAAERWTDVIDQVKSAGKWPDKFLAGAAGVAHGVAAANLALFTEAERRLTEANDSPAGEACARAIAWYLAMARRSQGNESAAVALLEWLQTTHPEPKVAAALKDPSYRLKTTTAEQIASRADPWDPGSVVTDNSGRERLLAEAQAELDRQIGLTRVKNQIERYRAATLMARVRAAKGMKVAQPSKHMIFTGPPGTGKTTIARVVANILAGLGVIAEPKLVETSRKDFVAEYEGQSAVKTAKTIDQALGGVLFIDEAYALVQERDGRTDPFGQEALDTLLARMENDRDRLVVIIAGYSSDIDRLLETNEGLRSRFATRIEFDTYSPEELLEIANVIAAADDSALTAEAAENFLQAAKQLEQRMLRGRRALDVAGNGRYARQLVEASEQCRDMRLAQVLDIDTLDEDRLREINGSDMAEAIAAVHAHLNMRE</sequence>
<gene>
    <name evidence="7" type="primary">eccA1</name>
    <name type="ordered locus">Rv3868</name>
    <name type="ORF">MTV027.03</name>
</gene>
<reference key="1">
    <citation type="journal article" date="1998" name="Nature">
        <title>Deciphering the biology of Mycobacterium tuberculosis from the complete genome sequence.</title>
        <authorList>
            <person name="Cole S.T."/>
            <person name="Brosch R."/>
            <person name="Parkhill J."/>
            <person name="Garnier T."/>
            <person name="Churcher C.M."/>
            <person name="Harris D.E."/>
            <person name="Gordon S.V."/>
            <person name="Eiglmeier K."/>
            <person name="Gas S."/>
            <person name="Barry C.E. III"/>
            <person name="Tekaia F."/>
            <person name="Badcock K."/>
            <person name="Basham D."/>
            <person name="Brown D."/>
            <person name="Chillingworth T."/>
            <person name="Connor R."/>
            <person name="Davies R.M."/>
            <person name="Devlin K."/>
            <person name="Feltwell T."/>
            <person name="Gentles S."/>
            <person name="Hamlin N."/>
            <person name="Holroyd S."/>
            <person name="Hornsby T."/>
            <person name="Jagels K."/>
            <person name="Krogh A."/>
            <person name="McLean J."/>
            <person name="Moule S."/>
            <person name="Murphy L.D."/>
            <person name="Oliver S."/>
            <person name="Osborne J."/>
            <person name="Quail M.A."/>
            <person name="Rajandream M.A."/>
            <person name="Rogers J."/>
            <person name="Rutter S."/>
            <person name="Seeger K."/>
            <person name="Skelton S."/>
            <person name="Squares S."/>
            <person name="Squares R."/>
            <person name="Sulston J.E."/>
            <person name="Taylor K."/>
            <person name="Whitehead S."/>
            <person name="Barrell B.G."/>
        </authorList>
    </citation>
    <scope>NUCLEOTIDE SEQUENCE [LARGE SCALE GENOMIC DNA]</scope>
    <source>
        <strain>ATCC 25618 / H37Rv</strain>
    </source>
</reference>
<reference key="2">
    <citation type="journal article" date="2008" name="J. Biol. Chem.">
        <title>Characterization of Rv3868, an essential hypothetical protein of the ESX-1 secretion system in Mycobacterium tuberculosis.</title>
        <authorList>
            <person name="Luthra A."/>
            <person name="Mahmood A."/>
            <person name="Arora A."/>
            <person name="Ramachandran R."/>
        </authorList>
    </citation>
    <scope>PROTEIN SEQUENCE OF 2-6</scope>
    <scope>FUNCTION</scope>
    <scope>ATPASE ACTIVITY</scope>
    <scope>BIOPHYSICOCHEMICAL PROPERTIES</scope>
    <scope>SUBUNIT</scope>
    <scope>DOMAIN</scope>
    <scope>MUTAGENESIS OF PRO-336; THR-338; LYS-340 AND ARG-429</scope>
    <source>
        <strain>ATCC 25618 / H37Rv</strain>
    </source>
</reference>
<reference key="3">
    <citation type="journal article" date="2006" name="Infect. Immun.">
        <title>Dissection of ESAT-6 system 1 of Mycobacterium tuberculosis and impact on immunogenicity and virulence.</title>
        <authorList>
            <person name="Brodin P."/>
            <person name="Majlessi L."/>
            <person name="Marsollier L."/>
            <person name="de Jonge M.I."/>
            <person name="Bottai D."/>
            <person name="Demangel C."/>
            <person name="Hinds J."/>
            <person name="Neyrolles O."/>
            <person name="Butcher P.D."/>
            <person name="Leclerc C."/>
            <person name="Cole S.T."/>
            <person name="Brosch R."/>
        </authorList>
    </citation>
    <scope>FUNCTION</scope>
    <scope>SUBUNIT</scope>
    <scope>DISRUPTION PHENOTYPE</scope>
</reference>
<reference key="4">
    <citation type="journal article" date="2008" name="BMC Syst. Biol.">
        <title>targetTB: a target identification pipeline for Mycobacterium tuberculosis through an interactome, reactome and genome-scale structural analysis.</title>
        <authorList>
            <person name="Raman K."/>
            <person name="Yeturu K."/>
            <person name="Chandra N."/>
        </authorList>
    </citation>
    <scope>IDENTIFICATION AS A DRUG TARGET [LARGE SCALE ANALYSIS]</scope>
</reference>
<reference key="5">
    <citation type="journal article" date="2009" name="Microbiol. Res.">
        <title>A protein linkage map of the ESAT-6 secretion system 1 (ESX-1) of Mycobacterium tuberculosis.</title>
        <authorList>
            <person name="Teutschbein J."/>
            <person name="Schumann G."/>
            <person name="Mollmann U."/>
            <person name="Grabley S."/>
            <person name="Cole S.T."/>
            <person name="Munder T."/>
        </authorList>
    </citation>
    <scope>INTERACTION WITH PPE68</scope>
</reference>
<reference key="6">
    <citation type="journal article" date="2009" name="Mol. Microbiol.">
        <title>ESX-1 secreted virulence factors are recognized by multiple cytosolic AAA ATPases in pathogenic mycobacteria.</title>
        <authorList>
            <person name="DiGiuseppe Champion P.A."/>
            <person name="Champion M.M."/>
            <person name="Manzanillo P."/>
            <person name="Cox J.S."/>
        </authorList>
    </citation>
    <scope>INTERACTION WITH ESPC AND ESPF</scope>
</reference>
<reference key="7">
    <citation type="journal article" date="2009" name="PLoS Pathog.">
        <title>Systematic genetic nomenclature for type VII secretion systems.</title>
        <authorList>
            <person name="Bitter W."/>
            <person name="Houben E.N."/>
            <person name="Bottai D."/>
            <person name="Brodin P."/>
            <person name="Brown E.J."/>
            <person name="Cox J.S."/>
            <person name="Derbyshire K."/>
            <person name="Fortune S.M."/>
            <person name="Gao L.Y."/>
            <person name="Liu J."/>
            <person name="Gey van Pittius N.C."/>
            <person name="Pym A.S."/>
            <person name="Rubin E.J."/>
            <person name="Sherman D.R."/>
            <person name="Cole S.T."/>
            <person name="Brosch R."/>
        </authorList>
    </citation>
    <scope>NOMENCLATURE</scope>
    <scope>SUBUNIT</scope>
</reference>
<reference key="8">
    <citation type="journal article" date="2011" name="Mol. Cell. Proteomics">
        <title>Proteogenomic analysis of Mycobacterium tuberculosis by high resolution mass spectrometry.</title>
        <authorList>
            <person name="Kelkar D.S."/>
            <person name="Kumar D."/>
            <person name="Kumar P."/>
            <person name="Balakrishnan L."/>
            <person name="Muthusamy B."/>
            <person name="Yadav A.K."/>
            <person name="Shrivastava P."/>
            <person name="Marimuthu A."/>
            <person name="Anand S."/>
            <person name="Sundaram H."/>
            <person name="Kingsbury R."/>
            <person name="Harsha H.C."/>
            <person name="Nair B."/>
            <person name="Prasad T.S."/>
            <person name="Chauhan D.S."/>
            <person name="Katoch K."/>
            <person name="Katoch V.M."/>
            <person name="Kumar P."/>
            <person name="Chaerkady R."/>
            <person name="Ramachandran S."/>
            <person name="Dash D."/>
            <person name="Pandey A."/>
        </authorList>
    </citation>
    <scope>IDENTIFICATION BY MASS SPECTROMETRY [LARGE SCALE ANALYSIS]</scope>
    <source>
        <strain>ATCC 25618 / H37Rv</strain>
    </source>
</reference>
<reference evidence="10" key="9">
    <citation type="journal article" date="2014" name="Proteins">
        <title>Crystal structure of the N-terminal domain of EccA ATPase from the ESX-1 secretion system of Mycobacterium tuberculosis.</title>
        <authorList>
            <person name="Wagner J.M."/>
            <person name="Evans T.J."/>
            <person name="Korotkov K.V."/>
        </authorList>
    </citation>
    <scope>X-RAY CRYSTALLOGRAPHY (2.00 ANGSTROMS) OF 1-280</scope>
    <source>
        <strain>H37Rv</strain>
    </source>
</reference>
<proteinExistence type="evidence at protein level"/>
<accession>P9WPH9</accession>
<accession>L0TFH7</accession>
<accession>O69733</accession>
<evidence type="ECO:0000255" key="1"/>
<evidence type="ECO:0000269" key="2">
    <source>
    </source>
</evidence>
<evidence type="ECO:0000269" key="3">
    <source>
    </source>
</evidence>
<evidence type="ECO:0000269" key="4">
    <source>
    </source>
</evidence>
<evidence type="ECO:0000269" key="5">
    <source>
    </source>
</evidence>
<evidence type="ECO:0000269" key="6">
    <source>
    </source>
</evidence>
<evidence type="ECO:0000303" key="7">
    <source>
    </source>
</evidence>
<evidence type="ECO:0000305" key="8"/>
<evidence type="ECO:0000305" key="9">
    <source>
    </source>
</evidence>
<evidence type="ECO:0007744" key="10">
    <source>
        <dbReference type="PDB" id="4F3V"/>
    </source>
</evidence>
<evidence type="ECO:0007829" key="11">
    <source>
        <dbReference type="PDB" id="4F3V"/>
    </source>
</evidence>
<comment type="function">
    <text evidence="2 4">Part of the ESX-1 specialized secretion system, which delivers several virulence factors to host cells during infection, including the key virulence factors EsxA (ESAT-6) and EsxB (CFP-10) (PubMed:16368961, PubMed:18974091). EccA1 exhibits ATPase activity and may provide energy for the export of ESX-1 substrates (PubMed:18974091).</text>
</comment>
<comment type="biophysicochemical properties">
    <kinetics>
        <KM evidence="4">0.8 uM for ATP</KM>
        <Vmax evidence="4">0.139 pmol/min/ug enzyme</Vmax>
    </kinetics>
</comment>
<comment type="subunit">
    <text evidence="2 3 4 6 9">Part of the ESX-1 / type VII secretion system (T7SS), which is composed of cytosolic and membrane components (PubMed:16368961, PubMed:19876390). Homohexamer (PubMed:18974091). Interacts with Ppe68, EspF and the C-terminus of EspC (PubMed:17433643, PubMed:19682254).</text>
</comment>
<comment type="subcellular location">
    <subcellularLocation>
        <location evidence="8">Cytoplasm</location>
    </subcellularLocation>
</comment>
<comment type="domain">
    <text evidence="4">The N-terminal region is compact and probably functions to regulate the ATPase activity and the oligomerization. The C-terminal region contains the ATPase activity and the oligomerization domain.</text>
</comment>
<comment type="disruption phenotype">
    <text evidence="2">Disruption abolishes EsxA and EsxB secretion, but not their expression. It results in a lack of antigen specific immunogenicity and leads to attenuated virulence.</text>
</comment>
<comment type="miscellaneous">
    <text evidence="5">Was identified as a high-confidence drug target.</text>
</comment>
<comment type="similarity">
    <text evidence="8">Belongs to the CbxX/CfxQ family.</text>
</comment>